<comment type="function">
    <text evidence="1">Catalyzes the reversible phosphorylation of UMP to UDP.</text>
</comment>
<comment type="catalytic activity">
    <reaction evidence="1">
        <text>UMP + ATP = UDP + ADP</text>
        <dbReference type="Rhea" id="RHEA:24400"/>
        <dbReference type="ChEBI" id="CHEBI:30616"/>
        <dbReference type="ChEBI" id="CHEBI:57865"/>
        <dbReference type="ChEBI" id="CHEBI:58223"/>
        <dbReference type="ChEBI" id="CHEBI:456216"/>
        <dbReference type="EC" id="2.7.4.22"/>
    </reaction>
</comment>
<comment type="activity regulation">
    <text evidence="1">Inhibited by UTP.</text>
</comment>
<comment type="pathway">
    <text evidence="1">Pyrimidine metabolism; CTP biosynthesis via de novo pathway; UDP from UMP (UMPK route): step 1/1.</text>
</comment>
<comment type="subunit">
    <text evidence="1">Homohexamer.</text>
</comment>
<comment type="subcellular location">
    <subcellularLocation>
        <location evidence="1">Cytoplasm</location>
    </subcellularLocation>
</comment>
<comment type="similarity">
    <text evidence="1">Belongs to the UMP kinase family.</text>
</comment>
<organism>
    <name type="scientific">Janthinobacterium sp. (strain Marseille)</name>
    <name type="common">Minibacterium massiliensis</name>
    <dbReference type="NCBI Taxonomy" id="375286"/>
    <lineage>
        <taxon>Bacteria</taxon>
        <taxon>Pseudomonadati</taxon>
        <taxon>Pseudomonadota</taxon>
        <taxon>Betaproteobacteria</taxon>
        <taxon>Burkholderiales</taxon>
        <taxon>Oxalobacteraceae</taxon>
        <taxon>Janthinobacterium</taxon>
    </lineage>
</organism>
<gene>
    <name evidence="1" type="primary">pyrH</name>
    <name type="ordered locus">mma_2056</name>
</gene>
<keyword id="KW-0067">ATP-binding</keyword>
<keyword id="KW-0963">Cytoplasm</keyword>
<keyword id="KW-0418">Kinase</keyword>
<keyword id="KW-0547">Nucleotide-binding</keyword>
<keyword id="KW-0665">Pyrimidine biosynthesis</keyword>
<keyword id="KW-0808">Transferase</keyword>
<feature type="chain" id="PRO_0000323868" description="Uridylate kinase">
    <location>
        <begin position="1"/>
        <end position="238"/>
    </location>
</feature>
<feature type="binding site" evidence="1">
    <location>
        <begin position="12"/>
        <end position="15"/>
    </location>
    <ligand>
        <name>ATP</name>
        <dbReference type="ChEBI" id="CHEBI:30616"/>
    </ligand>
</feature>
<feature type="binding site" evidence="1">
    <location>
        <position position="54"/>
    </location>
    <ligand>
        <name>UMP</name>
        <dbReference type="ChEBI" id="CHEBI:57865"/>
    </ligand>
</feature>
<feature type="binding site" evidence="1">
    <location>
        <position position="55"/>
    </location>
    <ligand>
        <name>ATP</name>
        <dbReference type="ChEBI" id="CHEBI:30616"/>
    </ligand>
</feature>
<feature type="binding site" evidence="1">
    <location>
        <position position="59"/>
    </location>
    <ligand>
        <name>ATP</name>
        <dbReference type="ChEBI" id="CHEBI:30616"/>
    </ligand>
</feature>
<feature type="binding site" evidence="1">
    <location>
        <position position="74"/>
    </location>
    <ligand>
        <name>UMP</name>
        <dbReference type="ChEBI" id="CHEBI:57865"/>
    </ligand>
</feature>
<feature type="binding site" evidence="1">
    <location>
        <begin position="135"/>
        <end position="142"/>
    </location>
    <ligand>
        <name>UMP</name>
        <dbReference type="ChEBI" id="CHEBI:57865"/>
    </ligand>
</feature>
<feature type="binding site" evidence="1">
    <location>
        <position position="162"/>
    </location>
    <ligand>
        <name>ATP</name>
        <dbReference type="ChEBI" id="CHEBI:30616"/>
    </ligand>
</feature>
<feature type="binding site" evidence="1">
    <location>
        <position position="168"/>
    </location>
    <ligand>
        <name>ATP</name>
        <dbReference type="ChEBI" id="CHEBI:30616"/>
    </ligand>
</feature>
<feature type="binding site" evidence="1">
    <location>
        <position position="171"/>
    </location>
    <ligand>
        <name>ATP</name>
        <dbReference type="ChEBI" id="CHEBI:30616"/>
    </ligand>
</feature>
<accession>A6SZP9</accession>
<evidence type="ECO:0000255" key="1">
    <source>
        <dbReference type="HAMAP-Rule" id="MF_01220"/>
    </source>
</evidence>
<sequence>MTTPAYKRVLLKLSGEALMGDDPYGINRATIERMVADVSEVAKLGVELAIVIGGGNIFRGVAPGAQGMDRATADYMGMLATVMNSLALADAMRQVGITARVMSAIAIEQVVEPYVRPKALQYLEEGKIVIFAAGTGNPFFTTDTAAALRGSEIGAEIVLKATKVDGVYSADPNKDPDATRYATITFDEAISKHLQVMDATAFALCRDQKLPIKVFSIVKPGALKRVVMGEDEGTLVHV</sequence>
<protein>
    <recommendedName>
        <fullName evidence="1">Uridylate kinase</fullName>
        <shortName evidence="1">UK</shortName>
        <ecNumber evidence="1">2.7.4.22</ecNumber>
    </recommendedName>
    <alternativeName>
        <fullName evidence="1">Uridine monophosphate kinase</fullName>
        <shortName evidence="1">UMP kinase</shortName>
        <shortName evidence="1">UMPK</shortName>
    </alternativeName>
</protein>
<reference key="1">
    <citation type="journal article" date="2007" name="PLoS Genet.">
        <title>Genome analysis of Minibacterium massiliensis highlights the convergent evolution of water-living bacteria.</title>
        <authorList>
            <person name="Audic S."/>
            <person name="Robert C."/>
            <person name="Campagna B."/>
            <person name="Parinello H."/>
            <person name="Claverie J.-M."/>
            <person name="Raoult D."/>
            <person name="Drancourt M."/>
        </authorList>
    </citation>
    <scope>NUCLEOTIDE SEQUENCE [LARGE SCALE GENOMIC DNA]</scope>
    <source>
        <strain>Marseille</strain>
    </source>
</reference>
<dbReference type="EC" id="2.7.4.22" evidence="1"/>
<dbReference type="EMBL" id="CP000269">
    <property type="protein sequence ID" value="ABR89539.1"/>
    <property type="molecule type" value="Genomic_DNA"/>
</dbReference>
<dbReference type="RefSeq" id="WP_012079909.1">
    <property type="nucleotide sequence ID" value="NC_009659.1"/>
</dbReference>
<dbReference type="SMR" id="A6SZP9"/>
<dbReference type="STRING" id="375286.mma_2056"/>
<dbReference type="KEGG" id="mms:mma_2056"/>
<dbReference type="eggNOG" id="COG0528">
    <property type="taxonomic scope" value="Bacteria"/>
</dbReference>
<dbReference type="HOGENOM" id="CLU_033861_0_0_4"/>
<dbReference type="OrthoDB" id="9807458at2"/>
<dbReference type="UniPathway" id="UPA00159">
    <property type="reaction ID" value="UER00275"/>
</dbReference>
<dbReference type="Proteomes" id="UP000006388">
    <property type="component" value="Chromosome"/>
</dbReference>
<dbReference type="GO" id="GO:0005829">
    <property type="term" value="C:cytosol"/>
    <property type="evidence" value="ECO:0007669"/>
    <property type="project" value="TreeGrafter"/>
</dbReference>
<dbReference type="GO" id="GO:0005524">
    <property type="term" value="F:ATP binding"/>
    <property type="evidence" value="ECO:0007669"/>
    <property type="project" value="UniProtKB-KW"/>
</dbReference>
<dbReference type="GO" id="GO:0033862">
    <property type="term" value="F:UMP kinase activity"/>
    <property type="evidence" value="ECO:0007669"/>
    <property type="project" value="UniProtKB-EC"/>
</dbReference>
<dbReference type="GO" id="GO:0044210">
    <property type="term" value="P:'de novo' CTP biosynthetic process"/>
    <property type="evidence" value="ECO:0007669"/>
    <property type="project" value="UniProtKB-UniRule"/>
</dbReference>
<dbReference type="GO" id="GO:0006225">
    <property type="term" value="P:UDP biosynthetic process"/>
    <property type="evidence" value="ECO:0007669"/>
    <property type="project" value="TreeGrafter"/>
</dbReference>
<dbReference type="CDD" id="cd04254">
    <property type="entry name" value="AAK_UMPK-PyrH-Ec"/>
    <property type="match status" value="1"/>
</dbReference>
<dbReference type="FunFam" id="3.40.1160.10:FF:000001">
    <property type="entry name" value="Uridylate kinase"/>
    <property type="match status" value="1"/>
</dbReference>
<dbReference type="Gene3D" id="3.40.1160.10">
    <property type="entry name" value="Acetylglutamate kinase-like"/>
    <property type="match status" value="1"/>
</dbReference>
<dbReference type="HAMAP" id="MF_01220_B">
    <property type="entry name" value="PyrH_B"/>
    <property type="match status" value="1"/>
</dbReference>
<dbReference type="InterPro" id="IPR036393">
    <property type="entry name" value="AceGlu_kinase-like_sf"/>
</dbReference>
<dbReference type="InterPro" id="IPR001048">
    <property type="entry name" value="Asp/Glu/Uridylate_kinase"/>
</dbReference>
<dbReference type="InterPro" id="IPR011817">
    <property type="entry name" value="Uridylate_kinase"/>
</dbReference>
<dbReference type="InterPro" id="IPR015963">
    <property type="entry name" value="Uridylate_kinase_bac"/>
</dbReference>
<dbReference type="NCBIfam" id="TIGR02075">
    <property type="entry name" value="pyrH_bact"/>
    <property type="match status" value="1"/>
</dbReference>
<dbReference type="PANTHER" id="PTHR42833">
    <property type="entry name" value="URIDYLATE KINASE"/>
    <property type="match status" value="1"/>
</dbReference>
<dbReference type="PANTHER" id="PTHR42833:SF4">
    <property type="entry name" value="URIDYLATE KINASE PUMPKIN, CHLOROPLASTIC"/>
    <property type="match status" value="1"/>
</dbReference>
<dbReference type="Pfam" id="PF00696">
    <property type="entry name" value="AA_kinase"/>
    <property type="match status" value="1"/>
</dbReference>
<dbReference type="PIRSF" id="PIRSF005650">
    <property type="entry name" value="Uridylate_kin"/>
    <property type="match status" value="1"/>
</dbReference>
<dbReference type="SUPFAM" id="SSF53633">
    <property type="entry name" value="Carbamate kinase-like"/>
    <property type="match status" value="1"/>
</dbReference>
<name>PYRH_JANMA</name>
<proteinExistence type="inferred from homology"/>